<name>YMH9_YEAST</name>
<dbReference type="EMBL" id="Z46373">
    <property type="protein sequence ID" value="CAA86499.1"/>
    <property type="molecule type" value="Genomic_DNA"/>
</dbReference>
<dbReference type="EMBL" id="BK006946">
    <property type="protein sequence ID" value="DAA09818.1"/>
    <property type="molecule type" value="Genomic_DNA"/>
</dbReference>
<dbReference type="PIR" id="S48818">
    <property type="entry name" value="S48818"/>
</dbReference>
<dbReference type="PDB" id="1XE7">
    <property type="method" value="X-ray"/>
    <property type="resolution" value="1.75 A"/>
    <property type="chains" value="A/B/C=1-201"/>
</dbReference>
<dbReference type="PDB" id="1XE8">
    <property type="method" value="X-ray"/>
    <property type="resolution" value="2.80 A"/>
    <property type="chains" value="A/B/C=1-201"/>
</dbReference>
<dbReference type="PDBsum" id="1XE7"/>
<dbReference type="PDBsum" id="1XE8"/>
<dbReference type="SMR" id="Q03629"/>
<dbReference type="BioGRID" id="35062">
    <property type="interactions" value="25"/>
</dbReference>
<dbReference type="DIP" id="DIP-4697N"/>
<dbReference type="FunCoup" id="Q03629">
    <property type="interactions" value="122"/>
</dbReference>
<dbReference type="IntAct" id="Q03629">
    <property type="interactions" value="1"/>
</dbReference>
<dbReference type="STRING" id="4932.YML079W"/>
<dbReference type="iPTMnet" id="Q03629"/>
<dbReference type="PaxDb" id="4932-YML079W"/>
<dbReference type="PeptideAtlas" id="Q03629"/>
<dbReference type="EnsemblFungi" id="YML079W_mRNA">
    <property type="protein sequence ID" value="YML079W"/>
    <property type="gene ID" value="YML079W"/>
</dbReference>
<dbReference type="KEGG" id="sce:YML079W"/>
<dbReference type="AGR" id="SGD:S000004544"/>
<dbReference type="SGD" id="S000004544">
    <property type="gene designation" value="YML079W"/>
</dbReference>
<dbReference type="VEuPathDB" id="FungiDB:YML079W"/>
<dbReference type="eggNOG" id="ENOG502RCWJ">
    <property type="taxonomic scope" value="Eukaryota"/>
</dbReference>
<dbReference type="HOGENOM" id="CLU_097615_0_0_1"/>
<dbReference type="InParanoid" id="Q03629"/>
<dbReference type="OMA" id="NDSRDYP"/>
<dbReference type="OrthoDB" id="6614653at2759"/>
<dbReference type="BioCyc" id="YEAST:G3O-32670-MONOMER"/>
<dbReference type="BioGRID-ORCS" id="854896">
    <property type="hits" value="0 hits in 10 CRISPR screens"/>
</dbReference>
<dbReference type="EvolutionaryTrace" id="Q03629"/>
<dbReference type="PRO" id="PR:Q03629"/>
<dbReference type="Proteomes" id="UP000002311">
    <property type="component" value="Chromosome XIII"/>
</dbReference>
<dbReference type="RNAct" id="Q03629">
    <property type="molecule type" value="protein"/>
</dbReference>
<dbReference type="GO" id="GO:0005737">
    <property type="term" value="C:cytoplasm"/>
    <property type="evidence" value="ECO:0007005"/>
    <property type="project" value="SGD"/>
</dbReference>
<dbReference type="GO" id="GO:0005634">
    <property type="term" value="C:nucleus"/>
    <property type="evidence" value="ECO:0007005"/>
    <property type="project" value="SGD"/>
</dbReference>
<dbReference type="GO" id="GO:0072527">
    <property type="term" value="P:pyrimidine-containing compound metabolic process"/>
    <property type="evidence" value="ECO:0000315"/>
    <property type="project" value="SGD"/>
</dbReference>
<dbReference type="CDD" id="cd06121">
    <property type="entry name" value="cupin_YML079wp"/>
    <property type="match status" value="1"/>
</dbReference>
<dbReference type="Gene3D" id="2.60.120.10">
    <property type="entry name" value="Jelly Rolls"/>
    <property type="match status" value="1"/>
</dbReference>
<dbReference type="InterPro" id="IPR009327">
    <property type="entry name" value="Cupin_DUF985"/>
</dbReference>
<dbReference type="InterPro" id="IPR014710">
    <property type="entry name" value="RmlC-like_jellyroll"/>
</dbReference>
<dbReference type="InterPro" id="IPR011051">
    <property type="entry name" value="RmlC_Cupin_sf"/>
</dbReference>
<dbReference type="InterPro" id="IPR039935">
    <property type="entry name" value="YML079W-like"/>
</dbReference>
<dbReference type="PANTHER" id="PTHR33387:SF3">
    <property type="entry name" value="DUF985 DOMAIN-CONTAINING PROTEIN"/>
    <property type="match status" value="1"/>
</dbReference>
<dbReference type="PANTHER" id="PTHR33387">
    <property type="entry name" value="RMLC-LIKE JELLY ROLL FOLD PROTEIN"/>
    <property type="match status" value="1"/>
</dbReference>
<dbReference type="Pfam" id="PF06172">
    <property type="entry name" value="Cupin_5"/>
    <property type="match status" value="1"/>
</dbReference>
<dbReference type="SUPFAM" id="SSF51182">
    <property type="entry name" value="RmlC-like cupins"/>
    <property type="match status" value="1"/>
</dbReference>
<proteinExistence type="evidence at protein level"/>
<feature type="chain" id="PRO_0000203248" description="Uncharacterized protein YML079W">
    <location>
        <begin position="1"/>
        <end position="201"/>
    </location>
</feature>
<feature type="helix" evidence="1">
    <location>
        <begin position="17"/>
        <end position="20"/>
    </location>
</feature>
<feature type="helix" evidence="1">
    <location>
        <begin position="28"/>
        <end position="37"/>
    </location>
</feature>
<feature type="strand" evidence="1">
    <location>
        <begin position="45"/>
        <end position="53"/>
    </location>
</feature>
<feature type="strand" evidence="1">
    <location>
        <begin position="57"/>
        <end position="60"/>
    </location>
</feature>
<feature type="strand" evidence="1">
    <location>
        <begin position="74"/>
        <end position="78"/>
    </location>
</feature>
<feature type="strand" evidence="1">
    <location>
        <begin position="80"/>
        <end position="87"/>
    </location>
</feature>
<feature type="strand" evidence="1">
    <location>
        <begin position="92"/>
        <end position="100"/>
    </location>
</feature>
<feature type="strand" evidence="1">
    <location>
        <begin position="102"/>
        <end position="109"/>
    </location>
</feature>
<feature type="strand" evidence="1">
    <location>
        <begin position="111"/>
        <end position="116"/>
    </location>
</feature>
<feature type="strand" evidence="1">
    <location>
        <begin position="122"/>
        <end position="129"/>
    </location>
</feature>
<feature type="helix" evidence="1">
    <location>
        <begin position="131"/>
        <end position="133"/>
    </location>
</feature>
<feature type="strand" evidence="1">
    <location>
        <begin position="136"/>
        <end position="141"/>
    </location>
</feature>
<feature type="strand" evidence="1">
    <location>
        <begin position="146"/>
        <end position="151"/>
    </location>
</feature>
<feature type="turn" evidence="1">
    <location>
        <begin position="155"/>
        <end position="159"/>
    </location>
</feature>
<feature type="strand" evidence="1">
    <location>
        <begin position="161"/>
        <end position="169"/>
    </location>
</feature>
<feature type="helix" evidence="1">
    <location>
        <begin position="173"/>
        <end position="175"/>
    </location>
</feature>
<feature type="strand" evidence="1">
    <location>
        <begin position="176"/>
        <end position="178"/>
    </location>
</feature>
<feature type="helix" evidence="1">
    <location>
        <begin position="181"/>
        <end position="189"/>
    </location>
</feature>
<feature type="helix" evidence="1">
    <location>
        <begin position="191"/>
        <end position="196"/>
    </location>
</feature>
<feature type="helix" evidence="1">
    <location>
        <begin position="198"/>
        <end position="200"/>
    </location>
</feature>
<sequence length="201" mass="22461">MSANVQEAANAAIEPASFVKVPMPEPPSSLQQLINDWQLIKHREGGYFKETDRSPYTMEVEKPVNGGSGNTEMVTRNQSTLIYYLLTPDSPIGKFHKNINRIIHILQRGKGQYVLVYPDGQVKSFKVGFDYKNGEVSQWVVPGGVFKASFLLPNEEFDNGFLISEVVVPGFDFEDHTFLKGEDELKHLVGPEKAAELAFLA</sequence>
<evidence type="ECO:0007829" key="1">
    <source>
        <dbReference type="PDB" id="1XE7"/>
    </source>
</evidence>
<organism>
    <name type="scientific">Saccharomyces cerevisiae (strain ATCC 204508 / S288c)</name>
    <name type="common">Baker's yeast</name>
    <dbReference type="NCBI Taxonomy" id="559292"/>
    <lineage>
        <taxon>Eukaryota</taxon>
        <taxon>Fungi</taxon>
        <taxon>Dikarya</taxon>
        <taxon>Ascomycota</taxon>
        <taxon>Saccharomycotina</taxon>
        <taxon>Saccharomycetes</taxon>
        <taxon>Saccharomycetales</taxon>
        <taxon>Saccharomycetaceae</taxon>
        <taxon>Saccharomyces</taxon>
    </lineage>
</organism>
<accession>Q03629</accession>
<accession>D6W0K4</accession>
<protein>
    <recommendedName>
        <fullName>Uncharacterized protein YML079W</fullName>
    </recommendedName>
</protein>
<reference key="1">
    <citation type="journal article" date="1997" name="Nature">
        <title>The nucleotide sequence of Saccharomyces cerevisiae chromosome XIII.</title>
        <authorList>
            <person name="Bowman S."/>
            <person name="Churcher C.M."/>
            <person name="Badcock K."/>
            <person name="Brown D."/>
            <person name="Chillingworth T."/>
            <person name="Connor R."/>
            <person name="Dedman K."/>
            <person name="Devlin K."/>
            <person name="Gentles S."/>
            <person name="Hamlin N."/>
            <person name="Hunt S."/>
            <person name="Jagels K."/>
            <person name="Lye G."/>
            <person name="Moule S."/>
            <person name="Odell C."/>
            <person name="Pearson D."/>
            <person name="Rajandream M.A."/>
            <person name="Rice P."/>
            <person name="Skelton J."/>
            <person name="Walsh S.V."/>
            <person name="Whitehead S."/>
            <person name="Barrell B.G."/>
        </authorList>
    </citation>
    <scope>NUCLEOTIDE SEQUENCE [LARGE SCALE GENOMIC DNA]</scope>
    <source>
        <strain>ATCC 204508 / S288c</strain>
    </source>
</reference>
<reference key="2">
    <citation type="journal article" date="2014" name="G3 (Bethesda)">
        <title>The reference genome sequence of Saccharomyces cerevisiae: Then and now.</title>
        <authorList>
            <person name="Engel S.R."/>
            <person name="Dietrich F.S."/>
            <person name="Fisk D.G."/>
            <person name="Binkley G."/>
            <person name="Balakrishnan R."/>
            <person name="Costanzo M.C."/>
            <person name="Dwight S.S."/>
            <person name="Hitz B.C."/>
            <person name="Karra K."/>
            <person name="Nash R.S."/>
            <person name="Weng S."/>
            <person name="Wong E.D."/>
            <person name="Lloyd P."/>
            <person name="Skrzypek M.S."/>
            <person name="Miyasato S.R."/>
            <person name="Simison M."/>
            <person name="Cherry J.M."/>
        </authorList>
    </citation>
    <scope>GENOME REANNOTATION</scope>
    <source>
        <strain>ATCC 204508 / S288c</strain>
    </source>
</reference>
<reference key="3">
    <citation type="journal article" date="2008" name="Mol. Cell. Proteomics">
        <title>A multidimensional chromatography technology for in-depth phosphoproteome analysis.</title>
        <authorList>
            <person name="Albuquerque C.P."/>
            <person name="Smolka M.B."/>
            <person name="Payne S.H."/>
            <person name="Bafna V."/>
            <person name="Eng J."/>
            <person name="Zhou H."/>
        </authorList>
    </citation>
    <scope>IDENTIFICATION BY MASS SPECTROMETRY [LARGE SCALE ANALYSIS]</scope>
</reference>
<keyword id="KW-0002">3D-structure</keyword>
<keyword id="KW-1185">Reference proteome</keyword>
<gene>
    <name type="ordered locus">YML079W</name>
</gene>